<proteinExistence type="inferred from homology"/>
<keyword id="KW-0963">Cytoplasm</keyword>
<keyword id="KW-0378">Hydrolase</keyword>
<keyword id="KW-0479">Metal-binding</keyword>
<keyword id="KW-0547">Nucleotide-binding</keyword>
<feature type="chain" id="PRO_1000196599" description="5'/3'-nucleotidase SurE">
    <location>
        <begin position="1"/>
        <end position="253"/>
    </location>
</feature>
<feature type="binding site" evidence="1">
    <location>
        <position position="8"/>
    </location>
    <ligand>
        <name>a divalent metal cation</name>
        <dbReference type="ChEBI" id="CHEBI:60240"/>
    </ligand>
</feature>
<feature type="binding site" evidence="1">
    <location>
        <position position="9"/>
    </location>
    <ligand>
        <name>a divalent metal cation</name>
        <dbReference type="ChEBI" id="CHEBI:60240"/>
    </ligand>
</feature>
<feature type="binding site" evidence="1">
    <location>
        <position position="39"/>
    </location>
    <ligand>
        <name>a divalent metal cation</name>
        <dbReference type="ChEBI" id="CHEBI:60240"/>
    </ligand>
</feature>
<feature type="binding site" evidence="1">
    <location>
        <position position="92"/>
    </location>
    <ligand>
        <name>a divalent metal cation</name>
        <dbReference type="ChEBI" id="CHEBI:60240"/>
    </ligand>
</feature>
<name>SURE_ECOLU</name>
<dbReference type="EC" id="3.1.3.5" evidence="1"/>
<dbReference type="EC" id="3.1.3.6" evidence="1"/>
<dbReference type="EC" id="3.6.1.11" evidence="1"/>
<dbReference type="EMBL" id="CU928163">
    <property type="protein sequence ID" value="CAR14235.1"/>
    <property type="molecule type" value="Genomic_DNA"/>
</dbReference>
<dbReference type="RefSeq" id="WP_001305779.1">
    <property type="nucleotide sequence ID" value="NC_011751.1"/>
</dbReference>
<dbReference type="RefSeq" id="YP_002413757.1">
    <property type="nucleotide sequence ID" value="NC_011751.1"/>
</dbReference>
<dbReference type="SMR" id="B7N6X4"/>
<dbReference type="STRING" id="585056.ECUMN_3068"/>
<dbReference type="KEGG" id="eum:ECUMN_3068"/>
<dbReference type="PATRIC" id="fig|585056.7.peg.3244"/>
<dbReference type="HOGENOM" id="CLU_045192_1_2_6"/>
<dbReference type="Proteomes" id="UP000007097">
    <property type="component" value="Chromosome"/>
</dbReference>
<dbReference type="GO" id="GO:0005737">
    <property type="term" value="C:cytoplasm"/>
    <property type="evidence" value="ECO:0007669"/>
    <property type="project" value="UniProtKB-SubCell"/>
</dbReference>
<dbReference type="GO" id="GO:0008254">
    <property type="term" value="F:3'-nucleotidase activity"/>
    <property type="evidence" value="ECO:0007669"/>
    <property type="project" value="UniProtKB-UniRule"/>
</dbReference>
<dbReference type="GO" id="GO:0008253">
    <property type="term" value="F:5'-nucleotidase activity"/>
    <property type="evidence" value="ECO:0007669"/>
    <property type="project" value="UniProtKB-UniRule"/>
</dbReference>
<dbReference type="GO" id="GO:0004309">
    <property type="term" value="F:exopolyphosphatase activity"/>
    <property type="evidence" value="ECO:0007669"/>
    <property type="project" value="UniProtKB-UniRule"/>
</dbReference>
<dbReference type="GO" id="GO:0046872">
    <property type="term" value="F:metal ion binding"/>
    <property type="evidence" value="ECO:0007669"/>
    <property type="project" value="UniProtKB-UniRule"/>
</dbReference>
<dbReference type="GO" id="GO:0000166">
    <property type="term" value="F:nucleotide binding"/>
    <property type="evidence" value="ECO:0007669"/>
    <property type="project" value="UniProtKB-KW"/>
</dbReference>
<dbReference type="FunFam" id="3.40.1210.10:FF:000001">
    <property type="entry name" value="5'/3'-nucleotidase SurE"/>
    <property type="match status" value="1"/>
</dbReference>
<dbReference type="Gene3D" id="3.40.1210.10">
    <property type="entry name" value="Survival protein SurE-like phosphatase/nucleotidase"/>
    <property type="match status" value="1"/>
</dbReference>
<dbReference type="HAMAP" id="MF_00060">
    <property type="entry name" value="SurE"/>
    <property type="match status" value="1"/>
</dbReference>
<dbReference type="InterPro" id="IPR030048">
    <property type="entry name" value="SurE"/>
</dbReference>
<dbReference type="InterPro" id="IPR002828">
    <property type="entry name" value="SurE-like_Pase/nucleotidase"/>
</dbReference>
<dbReference type="InterPro" id="IPR036523">
    <property type="entry name" value="SurE-like_sf"/>
</dbReference>
<dbReference type="NCBIfam" id="NF001488">
    <property type="entry name" value="PRK00346.1-1"/>
    <property type="match status" value="1"/>
</dbReference>
<dbReference type="NCBIfam" id="NF001489">
    <property type="entry name" value="PRK00346.1-3"/>
    <property type="match status" value="1"/>
</dbReference>
<dbReference type="NCBIfam" id="NF001490">
    <property type="entry name" value="PRK00346.1-4"/>
    <property type="match status" value="1"/>
</dbReference>
<dbReference type="NCBIfam" id="TIGR00087">
    <property type="entry name" value="surE"/>
    <property type="match status" value="1"/>
</dbReference>
<dbReference type="PANTHER" id="PTHR30457">
    <property type="entry name" value="5'-NUCLEOTIDASE SURE"/>
    <property type="match status" value="1"/>
</dbReference>
<dbReference type="PANTHER" id="PTHR30457:SF12">
    <property type="entry name" value="5'_3'-NUCLEOTIDASE SURE"/>
    <property type="match status" value="1"/>
</dbReference>
<dbReference type="Pfam" id="PF01975">
    <property type="entry name" value="SurE"/>
    <property type="match status" value="1"/>
</dbReference>
<dbReference type="SUPFAM" id="SSF64167">
    <property type="entry name" value="SurE-like"/>
    <property type="match status" value="1"/>
</dbReference>
<gene>
    <name evidence="1" type="primary">surE</name>
    <name type="ordered locus">ECUMN_3068</name>
</gene>
<organism>
    <name type="scientific">Escherichia coli O17:K52:H18 (strain UMN026 / ExPEC)</name>
    <dbReference type="NCBI Taxonomy" id="585056"/>
    <lineage>
        <taxon>Bacteria</taxon>
        <taxon>Pseudomonadati</taxon>
        <taxon>Pseudomonadota</taxon>
        <taxon>Gammaproteobacteria</taxon>
        <taxon>Enterobacterales</taxon>
        <taxon>Enterobacteriaceae</taxon>
        <taxon>Escherichia</taxon>
    </lineage>
</organism>
<reference key="1">
    <citation type="journal article" date="2009" name="PLoS Genet.">
        <title>Organised genome dynamics in the Escherichia coli species results in highly diverse adaptive paths.</title>
        <authorList>
            <person name="Touchon M."/>
            <person name="Hoede C."/>
            <person name="Tenaillon O."/>
            <person name="Barbe V."/>
            <person name="Baeriswyl S."/>
            <person name="Bidet P."/>
            <person name="Bingen E."/>
            <person name="Bonacorsi S."/>
            <person name="Bouchier C."/>
            <person name="Bouvet O."/>
            <person name="Calteau A."/>
            <person name="Chiapello H."/>
            <person name="Clermont O."/>
            <person name="Cruveiller S."/>
            <person name="Danchin A."/>
            <person name="Diard M."/>
            <person name="Dossat C."/>
            <person name="Karoui M.E."/>
            <person name="Frapy E."/>
            <person name="Garry L."/>
            <person name="Ghigo J.M."/>
            <person name="Gilles A.M."/>
            <person name="Johnson J."/>
            <person name="Le Bouguenec C."/>
            <person name="Lescat M."/>
            <person name="Mangenot S."/>
            <person name="Martinez-Jehanne V."/>
            <person name="Matic I."/>
            <person name="Nassif X."/>
            <person name="Oztas S."/>
            <person name="Petit M.A."/>
            <person name="Pichon C."/>
            <person name="Rouy Z."/>
            <person name="Ruf C.S."/>
            <person name="Schneider D."/>
            <person name="Tourret J."/>
            <person name="Vacherie B."/>
            <person name="Vallenet D."/>
            <person name="Medigue C."/>
            <person name="Rocha E.P.C."/>
            <person name="Denamur E."/>
        </authorList>
    </citation>
    <scope>NUCLEOTIDE SEQUENCE [LARGE SCALE GENOMIC DNA]</scope>
    <source>
        <strain>UMN026 / ExPEC</strain>
    </source>
</reference>
<sequence length="253" mass="26900">MRILLSNDDGVHAPGIQTLAKALREFADVQVVAPDRNRSGASNSLTLESSLRTFTFENGDIAVQMGTPTDCVYLGVNALMRPRPDIVVSGINAGPNLGDDVIYSGTVAAAMEGRHLGFPALAVSLDGHKHYDTAAAVTCSILRALCKEPLRTGRILNINVPDLPLDQIKGIRVTRCGTRHPADKVIPQQDPRGNTLYWIGPPGGKCDAGPGTDFAAVDEGYVSITPLHVDLTAHSAQDVVSDWLNSVGVGTQW</sequence>
<protein>
    <recommendedName>
        <fullName evidence="1">5'/3'-nucleotidase SurE</fullName>
        <ecNumber evidence="1">3.1.3.5</ecNumber>
        <ecNumber evidence="1">3.1.3.6</ecNumber>
    </recommendedName>
    <alternativeName>
        <fullName evidence="1">Exopolyphosphatase</fullName>
        <ecNumber evidence="1">3.6.1.11</ecNumber>
    </alternativeName>
    <alternativeName>
        <fullName evidence="1">Nucleoside monophosphate phosphohydrolase</fullName>
    </alternativeName>
</protein>
<comment type="function">
    <text evidence="1">Nucleotidase with a broad substrate specificity as it can dephosphorylate various ribo- and deoxyribonucleoside 5'-monophosphates and ribonucleoside 3'-monophosphates with highest affinity to 3'-AMP. Also hydrolyzes polyphosphate (exopolyphosphatase activity) with the preference for short-chain-length substrates (P20-25). Might be involved in the regulation of dNTP and NTP pools, and in the turnover of 3'-mononucleotides produced by numerous intracellular RNases (T1, T2, and F) during the degradation of various RNAs.</text>
</comment>
<comment type="catalytic activity">
    <reaction evidence="1">
        <text>a ribonucleoside 5'-phosphate + H2O = a ribonucleoside + phosphate</text>
        <dbReference type="Rhea" id="RHEA:12484"/>
        <dbReference type="ChEBI" id="CHEBI:15377"/>
        <dbReference type="ChEBI" id="CHEBI:18254"/>
        <dbReference type="ChEBI" id="CHEBI:43474"/>
        <dbReference type="ChEBI" id="CHEBI:58043"/>
        <dbReference type="EC" id="3.1.3.5"/>
    </reaction>
</comment>
<comment type="catalytic activity">
    <reaction evidence="1">
        <text>a ribonucleoside 3'-phosphate + H2O = a ribonucleoside + phosphate</text>
        <dbReference type="Rhea" id="RHEA:10144"/>
        <dbReference type="ChEBI" id="CHEBI:13197"/>
        <dbReference type="ChEBI" id="CHEBI:15377"/>
        <dbReference type="ChEBI" id="CHEBI:18254"/>
        <dbReference type="ChEBI" id="CHEBI:43474"/>
        <dbReference type="EC" id="3.1.3.6"/>
    </reaction>
</comment>
<comment type="catalytic activity">
    <reaction evidence="1">
        <text>[phosphate](n) + H2O = [phosphate](n-1) + phosphate + H(+)</text>
        <dbReference type="Rhea" id="RHEA:21528"/>
        <dbReference type="Rhea" id="RHEA-COMP:9859"/>
        <dbReference type="Rhea" id="RHEA-COMP:14279"/>
        <dbReference type="ChEBI" id="CHEBI:15377"/>
        <dbReference type="ChEBI" id="CHEBI:15378"/>
        <dbReference type="ChEBI" id="CHEBI:16838"/>
        <dbReference type="ChEBI" id="CHEBI:43474"/>
        <dbReference type="EC" id="3.6.1.11"/>
    </reaction>
</comment>
<comment type="cofactor">
    <cofactor evidence="1">
        <name>a divalent metal cation</name>
        <dbReference type="ChEBI" id="CHEBI:60240"/>
    </cofactor>
    <text evidence="1">Binds 1 divalent metal cation per subunit.</text>
</comment>
<comment type="subcellular location">
    <subcellularLocation>
        <location evidence="1">Cytoplasm</location>
    </subcellularLocation>
</comment>
<comment type="similarity">
    <text evidence="1">Belongs to the SurE nucleotidase family.</text>
</comment>
<evidence type="ECO:0000255" key="1">
    <source>
        <dbReference type="HAMAP-Rule" id="MF_00060"/>
    </source>
</evidence>
<accession>B7N6X4</accession>